<protein>
    <recommendedName>
        <fullName evidence="3">PRAME family member 12</fullName>
    </recommendedName>
</protein>
<organism>
    <name type="scientific">Homo sapiens</name>
    <name type="common">Human</name>
    <dbReference type="NCBI Taxonomy" id="9606"/>
    <lineage>
        <taxon>Eukaryota</taxon>
        <taxon>Metazoa</taxon>
        <taxon>Chordata</taxon>
        <taxon>Craniata</taxon>
        <taxon>Vertebrata</taxon>
        <taxon>Euteleostomi</taxon>
        <taxon>Mammalia</taxon>
        <taxon>Eutheria</taxon>
        <taxon>Euarchontoglires</taxon>
        <taxon>Primates</taxon>
        <taxon>Haplorrhini</taxon>
        <taxon>Catarrhini</taxon>
        <taxon>Hominidae</taxon>
        <taxon>Homo</taxon>
    </lineage>
</organism>
<comment type="similarity">
    <text evidence="2">Belongs to the PRAME family.</text>
</comment>
<reference key="1">
    <citation type="journal article" date="2006" name="Nature">
        <title>The DNA sequence and biological annotation of human chromosome 1.</title>
        <authorList>
            <person name="Gregory S.G."/>
            <person name="Barlow K.F."/>
            <person name="McLay K.E."/>
            <person name="Kaul R."/>
            <person name="Swarbreck D."/>
            <person name="Dunham A."/>
            <person name="Scott C.E."/>
            <person name="Howe K.L."/>
            <person name="Woodfine K."/>
            <person name="Spencer C.C.A."/>
            <person name="Jones M.C."/>
            <person name="Gillson C."/>
            <person name="Searle S."/>
            <person name="Zhou Y."/>
            <person name="Kokocinski F."/>
            <person name="McDonald L."/>
            <person name="Evans R."/>
            <person name="Phillips K."/>
            <person name="Atkinson A."/>
            <person name="Cooper R."/>
            <person name="Jones C."/>
            <person name="Hall R.E."/>
            <person name="Andrews T.D."/>
            <person name="Lloyd C."/>
            <person name="Ainscough R."/>
            <person name="Almeida J.P."/>
            <person name="Ambrose K.D."/>
            <person name="Anderson F."/>
            <person name="Andrew R.W."/>
            <person name="Ashwell R.I.S."/>
            <person name="Aubin K."/>
            <person name="Babbage A.K."/>
            <person name="Bagguley C.L."/>
            <person name="Bailey J."/>
            <person name="Beasley H."/>
            <person name="Bethel G."/>
            <person name="Bird C.P."/>
            <person name="Bray-Allen S."/>
            <person name="Brown J.Y."/>
            <person name="Brown A.J."/>
            <person name="Buckley D."/>
            <person name="Burton J."/>
            <person name="Bye J."/>
            <person name="Carder C."/>
            <person name="Chapman J.C."/>
            <person name="Clark S.Y."/>
            <person name="Clarke G."/>
            <person name="Clee C."/>
            <person name="Cobley V."/>
            <person name="Collier R.E."/>
            <person name="Corby N."/>
            <person name="Coville G.J."/>
            <person name="Davies J."/>
            <person name="Deadman R."/>
            <person name="Dunn M."/>
            <person name="Earthrowl M."/>
            <person name="Ellington A.G."/>
            <person name="Errington H."/>
            <person name="Frankish A."/>
            <person name="Frankland J."/>
            <person name="French L."/>
            <person name="Garner P."/>
            <person name="Garnett J."/>
            <person name="Gay L."/>
            <person name="Ghori M.R.J."/>
            <person name="Gibson R."/>
            <person name="Gilby L.M."/>
            <person name="Gillett W."/>
            <person name="Glithero R.J."/>
            <person name="Grafham D.V."/>
            <person name="Griffiths C."/>
            <person name="Griffiths-Jones S."/>
            <person name="Grocock R."/>
            <person name="Hammond S."/>
            <person name="Harrison E.S.I."/>
            <person name="Hart E."/>
            <person name="Haugen E."/>
            <person name="Heath P.D."/>
            <person name="Holmes S."/>
            <person name="Holt K."/>
            <person name="Howden P.J."/>
            <person name="Hunt A.R."/>
            <person name="Hunt S.E."/>
            <person name="Hunter G."/>
            <person name="Isherwood J."/>
            <person name="James R."/>
            <person name="Johnson C."/>
            <person name="Johnson D."/>
            <person name="Joy A."/>
            <person name="Kay M."/>
            <person name="Kershaw J.K."/>
            <person name="Kibukawa M."/>
            <person name="Kimberley A.M."/>
            <person name="King A."/>
            <person name="Knights A.J."/>
            <person name="Lad H."/>
            <person name="Laird G."/>
            <person name="Lawlor S."/>
            <person name="Leongamornlert D.A."/>
            <person name="Lloyd D.M."/>
            <person name="Loveland J."/>
            <person name="Lovell J."/>
            <person name="Lush M.J."/>
            <person name="Lyne R."/>
            <person name="Martin S."/>
            <person name="Mashreghi-Mohammadi M."/>
            <person name="Matthews L."/>
            <person name="Matthews N.S.W."/>
            <person name="McLaren S."/>
            <person name="Milne S."/>
            <person name="Mistry S."/>
            <person name="Moore M.J.F."/>
            <person name="Nickerson T."/>
            <person name="O'Dell C.N."/>
            <person name="Oliver K."/>
            <person name="Palmeiri A."/>
            <person name="Palmer S.A."/>
            <person name="Parker A."/>
            <person name="Patel D."/>
            <person name="Pearce A.V."/>
            <person name="Peck A.I."/>
            <person name="Pelan S."/>
            <person name="Phelps K."/>
            <person name="Phillimore B.J."/>
            <person name="Plumb R."/>
            <person name="Rajan J."/>
            <person name="Raymond C."/>
            <person name="Rouse G."/>
            <person name="Saenphimmachak C."/>
            <person name="Sehra H.K."/>
            <person name="Sheridan E."/>
            <person name="Shownkeen R."/>
            <person name="Sims S."/>
            <person name="Skuce C.D."/>
            <person name="Smith M."/>
            <person name="Steward C."/>
            <person name="Subramanian S."/>
            <person name="Sycamore N."/>
            <person name="Tracey A."/>
            <person name="Tromans A."/>
            <person name="Van Helmond Z."/>
            <person name="Wall M."/>
            <person name="Wallis J.M."/>
            <person name="White S."/>
            <person name="Whitehead S.L."/>
            <person name="Wilkinson J.E."/>
            <person name="Willey D.L."/>
            <person name="Williams H."/>
            <person name="Wilming L."/>
            <person name="Wray P.W."/>
            <person name="Wu Z."/>
            <person name="Coulson A."/>
            <person name="Vaudin M."/>
            <person name="Sulston J.E."/>
            <person name="Durbin R.M."/>
            <person name="Hubbard T."/>
            <person name="Wooster R."/>
            <person name="Dunham I."/>
            <person name="Carter N.P."/>
            <person name="McVean G."/>
            <person name="Ross M.T."/>
            <person name="Harrow J."/>
            <person name="Olson M.V."/>
            <person name="Beck S."/>
            <person name="Rogers J."/>
            <person name="Bentley D.R."/>
        </authorList>
    </citation>
    <scope>NUCLEOTIDE SEQUENCE [LARGE SCALE GENOMIC DNA]</scope>
</reference>
<sequence>MSLQAPPRLLELAEQSLLRDRALAIPTLEELPRELFPPLFMEAFTRRCCETLTTMVQAWPFTCLPLGSLMKSCNLEIFRAVLEGLDALLAQKVRPRRWKLQVLDLRNVDENFWGIWSGASALSPEALSKRRTAGNCPRPGGQQPLMVILDLCFKNGTLDECLTHFLEWGKQRKGLLHVCCKELQIFGIAIHRIIEVLNTVELDCIQEVEVCCPWELSILIRFAPYLGQMRNLRKLVLFNIHVSACIPLDRKEQFVIQFTSQFLKLDYFQKLYMHSVSFLEGHLDQLLRCLQAPLETVVMTECLLSESDLKHLSWCPSIRQLKELDLRGITLTHFSPEPLSVLLEQAEATLQTLDLEDCGIVDSQLSAILPALSRCSQLSTFSFCGNLISMAALENLLRHTVGLSKLSLELYPAPLESYDAQGALCWGRFSQLGAELMKTLRDLRQPKIIVFSTVPCPRCGIRASYDLEPSHCLLNACCQGGFI</sequence>
<feature type="chain" id="PRO_0000156986" description="PRAME family member 12">
    <location>
        <begin position="1"/>
        <end position="483"/>
    </location>
</feature>
<feature type="repeat" description="LRR 1; degenerate" evidence="1">
    <location>
        <begin position="97"/>
        <end position="122"/>
    </location>
</feature>
<feature type="repeat" description="LRR 2; degenerate" evidence="1">
    <location>
        <begin position="177"/>
        <end position="201"/>
    </location>
</feature>
<feature type="repeat" description="LRR 3; degenerate" evidence="1">
    <location>
        <begin position="202"/>
        <end position="228"/>
    </location>
</feature>
<feature type="repeat" description="LRR 4; degenerate" evidence="1">
    <location>
        <begin position="229"/>
        <end position="264"/>
    </location>
</feature>
<feature type="repeat" description="LRR 5" evidence="1">
    <location>
        <begin position="265"/>
        <end position="290"/>
    </location>
</feature>
<feature type="repeat" description="LRR 6" evidence="1">
    <location>
        <begin position="291"/>
        <end position="322"/>
    </location>
</feature>
<feature type="repeat" description="LRR 7" evidence="1">
    <location>
        <begin position="323"/>
        <end position="341"/>
    </location>
</feature>
<feature type="repeat" description="LRR 8" evidence="1">
    <location>
        <begin position="347"/>
        <end position="374"/>
    </location>
</feature>
<feature type="repeat" description="LRR 9" evidence="1">
    <location>
        <begin position="375"/>
        <end position="399"/>
    </location>
</feature>
<feature type="sequence variant" id="VAR_053608" description="In dbSNP:rs17346571.">
    <original>T</original>
    <variation>K</variation>
    <location>
        <position position="53"/>
    </location>
</feature>
<feature type="sequence variant" id="VAR_053609" description="In dbSNP:rs1812242.">
    <original>T</original>
    <variation>M</variation>
    <location>
        <position position="157"/>
    </location>
</feature>
<accession>O95522</accession>
<keyword id="KW-0433">Leucine-rich repeat</keyword>
<keyword id="KW-1185">Reference proteome</keyword>
<keyword id="KW-0677">Repeat</keyword>
<proteinExistence type="inferred from homology"/>
<gene>
    <name evidence="3" type="primary">PRAMEF12</name>
</gene>
<dbReference type="EMBL" id="AC244670">
    <property type="status" value="NOT_ANNOTATED_CDS"/>
    <property type="molecule type" value="Genomic_DNA"/>
</dbReference>
<dbReference type="EMBL" id="AL023753">
    <property type="status" value="NOT_ANNOTATED_CDS"/>
    <property type="molecule type" value="Genomic_DNA"/>
</dbReference>
<dbReference type="CCDS" id="CCDS41254.1"/>
<dbReference type="RefSeq" id="NP_001074299.2">
    <property type="nucleotide sequence ID" value="NM_001080830.5"/>
</dbReference>
<dbReference type="SMR" id="O95522"/>
<dbReference type="FunCoup" id="O95522">
    <property type="interactions" value="16"/>
</dbReference>
<dbReference type="IntAct" id="O95522">
    <property type="interactions" value="4"/>
</dbReference>
<dbReference type="STRING" id="9606.ENSP00000350358"/>
<dbReference type="iPTMnet" id="O95522"/>
<dbReference type="PhosphoSitePlus" id="O95522"/>
<dbReference type="BioMuta" id="PRAMEF12"/>
<dbReference type="MassIVE" id="O95522"/>
<dbReference type="PaxDb" id="9606-ENSP00000350358"/>
<dbReference type="PeptideAtlas" id="O95522"/>
<dbReference type="ProteomicsDB" id="50934"/>
<dbReference type="Pumba" id="O95522"/>
<dbReference type="Antibodypedia" id="48073">
    <property type="antibodies" value="59 antibodies from 13 providers"/>
</dbReference>
<dbReference type="DNASU" id="390999"/>
<dbReference type="Ensembl" id="ENST00000357726.5">
    <property type="protein sequence ID" value="ENSP00000350358.4"/>
    <property type="gene ID" value="ENSG00000116726.5"/>
</dbReference>
<dbReference type="GeneID" id="390999"/>
<dbReference type="KEGG" id="hsa:390999"/>
<dbReference type="MANE-Select" id="ENST00000357726.5">
    <property type="protein sequence ID" value="ENSP00000350358.4"/>
    <property type="RefSeq nucleotide sequence ID" value="NM_001080830.5"/>
    <property type="RefSeq protein sequence ID" value="NP_001074299.2"/>
</dbReference>
<dbReference type="UCSC" id="uc001aui.5">
    <property type="organism name" value="human"/>
</dbReference>
<dbReference type="AGR" id="HGNC:22125"/>
<dbReference type="CTD" id="390999"/>
<dbReference type="DisGeNET" id="390999"/>
<dbReference type="GeneCards" id="PRAMEF12"/>
<dbReference type="HGNC" id="HGNC:22125">
    <property type="gene designation" value="PRAMEF12"/>
</dbReference>
<dbReference type="HPA" id="ENSG00000116726">
    <property type="expression patterns" value="Not detected"/>
</dbReference>
<dbReference type="neXtProt" id="NX_O95522"/>
<dbReference type="OpenTargets" id="ENSG00000116726"/>
<dbReference type="PharmGKB" id="PA145148158"/>
<dbReference type="VEuPathDB" id="HostDB:ENSG00000116726"/>
<dbReference type="eggNOG" id="ENOG502QWSJ">
    <property type="taxonomic scope" value="Eukaryota"/>
</dbReference>
<dbReference type="GeneTree" id="ENSGT01030000234531"/>
<dbReference type="HOGENOM" id="CLU_039635_2_1_1"/>
<dbReference type="InParanoid" id="O95522"/>
<dbReference type="OMA" id="RTAGNCP"/>
<dbReference type="OrthoDB" id="9515160at2759"/>
<dbReference type="PAN-GO" id="O95522">
    <property type="GO annotations" value="1 GO annotation based on evolutionary models"/>
</dbReference>
<dbReference type="TreeFam" id="TF332708"/>
<dbReference type="PathwayCommons" id="O95522"/>
<dbReference type="BioGRID-ORCS" id="390999">
    <property type="hits" value="16 hits in 1138 CRISPR screens"/>
</dbReference>
<dbReference type="ChiTaRS" id="PRAMEF12">
    <property type="organism name" value="human"/>
</dbReference>
<dbReference type="GenomeRNAi" id="390999"/>
<dbReference type="Pharos" id="O95522">
    <property type="development level" value="Tdark"/>
</dbReference>
<dbReference type="PRO" id="PR:O95522"/>
<dbReference type="Proteomes" id="UP000005640">
    <property type="component" value="Chromosome 1"/>
</dbReference>
<dbReference type="RNAct" id="O95522">
    <property type="molecule type" value="protein"/>
</dbReference>
<dbReference type="Bgee" id="ENSG00000116726">
    <property type="expression patterns" value="Expressed in male germ line stem cell (sensu Vertebrata) in testis"/>
</dbReference>
<dbReference type="GO" id="GO:0031462">
    <property type="term" value="C:Cul2-RING ubiquitin ligase complex"/>
    <property type="evidence" value="ECO:0000318"/>
    <property type="project" value="GO_Central"/>
</dbReference>
<dbReference type="GO" id="GO:0005737">
    <property type="term" value="C:cytoplasm"/>
    <property type="evidence" value="ECO:0000318"/>
    <property type="project" value="GO_Central"/>
</dbReference>
<dbReference type="GO" id="GO:1990756">
    <property type="term" value="F:ubiquitin-like ligase-substrate adaptor activity"/>
    <property type="evidence" value="ECO:0000318"/>
    <property type="project" value="GO_Central"/>
</dbReference>
<dbReference type="GO" id="GO:0043066">
    <property type="term" value="P:negative regulation of apoptotic process"/>
    <property type="evidence" value="ECO:0007669"/>
    <property type="project" value="InterPro"/>
</dbReference>
<dbReference type="GO" id="GO:0045596">
    <property type="term" value="P:negative regulation of cell differentiation"/>
    <property type="evidence" value="ECO:0007669"/>
    <property type="project" value="InterPro"/>
</dbReference>
<dbReference type="GO" id="GO:0045892">
    <property type="term" value="P:negative regulation of DNA-templated transcription"/>
    <property type="evidence" value="ECO:0007669"/>
    <property type="project" value="InterPro"/>
</dbReference>
<dbReference type="GO" id="GO:0008284">
    <property type="term" value="P:positive regulation of cell population proliferation"/>
    <property type="evidence" value="ECO:0007669"/>
    <property type="project" value="InterPro"/>
</dbReference>
<dbReference type="GO" id="GO:0043161">
    <property type="term" value="P:proteasome-mediated ubiquitin-dependent protein catabolic process"/>
    <property type="evidence" value="ECO:0000318"/>
    <property type="project" value="GO_Central"/>
</dbReference>
<dbReference type="FunFam" id="3.80.10.10:FF:000079">
    <property type="entry name" value="PRAME family member 18"/>
    <property type="match status" value="1"/>
</dbReference>
<dbReference type="Gene3D" id="3.80.10.10">
    <property type="entry name" value="Ribonuclease Inhibitor"/>
    <property type="match status" value="1"/>
</dbReference>
<dbReference type="InterPro" id="IPR032675">
    <property type="entry name" value="LRR_dom_sf"/>
</dbReference>
<dbReference type="InterPro" id="IPR026271">
    <property type="entry name" value="PRAME"/>
</dbReference>
<dbReference type="InterPro" id="IPR050694">
    <property type="entry name" value="PRAME_domain"/>
</dbReference>
<dbReference type="PANTHER" id="PTHR14224:SF94">
    <property type="entry name" value="PRAME FAMILY MEMBER 12"/>
    <property type="match status" value="1"/>
</dbReference>
<dbReference type="PANTHER" id="PTHR14224">
    <property type="entry name" value="SIMILAR TO PREFERENTIALLY EXPRESSED ANTIGEN IN MELANOMA-LIKE 3"/>
    <property type="match status" value="1"/>
</dbReference>
<dbReference type="PIRSF" id="PIRSF038286">
    <property type="entry name" value="PRAME"/>
    <property type="match status" value="1"/>
</dbReference>
<dbReference type="SUPFAM" id="SSF52047">
    <property type="entry name" value="RNI-like"/>
    <property type="match status" value="1"/>
</dbReference>
<evidence type="ECO:0000250" key="1">
    <source>
        <dbReference type="UniProtKB" id="Q3UWY1"/>
    </source>
</evidence>
<evidence type="ECO:0000305" key="2"/>
<evidence type="ECO:0000312" key="3">
    <source>
        <dbReference type="HGNC" id="HGNC:22125"/>
    </source>
</evidence>
<name>PRA12_HUMAN</name>